<protein>
    <recommendedName>
        <fullName evidence="1">Ribosomal RNA large subunit methyltransferase E</fullName>
        <ecNumber evidence="1">2.1.1.166</ecNumber>
    </recommendedName>
    <alternativeName>
        <fullName evidence="1">23S rRNA Um2552 methyltransferase</fullName>
    </alternativeName>
    <alternativeName>
        <fullName evidence="1">rRNA (uridine-2'-O-)-methyltransferase</fullName>
    </alternativeName>
</protein>
<sequence>MTGKKRSASSSRWLQEHFSDKYVQQAQKKGLRSRAWFKLDEIQQSDKLFKPGMTVVDLGAAPGGWSQYVVTQIGGKGRIIACDLLPMDPIVGVDFLQGDFRDELVMKALLERVGDSKVQVVMSDMAPNMSGTPAVDIPRAMYLVELALEMCRDVLAPGGSFVVKVFQGEGFDEYLREIRSLFTKVKVRKPDSSRARSREVYIVATGRK</sequence>
<evidence type="ECO:0000255" key="1">
    <source>
        <dbReference type="HAMAP-Rule" id="MF_01547"/>
    </source>
</evidence>
<gene>
    <name evidence="1" type="primary">rlmE</name>
    <name evidence="1" type="synonym">ftsJ</name>
    <name evidence="1" type="synonym">rrmJ</name>
    <name type="ordered locus">SeSA_A3487</name>
</gene>
<name>RLME_SALSV</name>
<comment type="function">
    <text evidence="1">Specifically methylates the uridine in position 2552 of 23S rRNA at the 2'-O position of the ribose in the fully assembled 50S ribosomal subunit.</text>
</comment>
<comment type="catalytic activity">
    <reaction evidence="1">
        <text>uridine(2552) in 23S rRNA + S-adenosyl-L-methionine = 2'-O-methyluridine(2552) in 23S rRNA + S-adenosyl-L-homocysteine + H(+)</text>
        <dbReference type="Rhea" id="RHEA:42720"/>
        <dbReference type="Rhea" id="RHEA-COMP:10202"/>
        <dbReference type="Rhea" id="RHEA-COMP:10203"/>
        <dbReference type="ChEBI" id="CHEBI:15378"/>
        <dbReference type="ChEBI" id="CHEBI:57856"/>
        <dbReference type="ChEBI" id="CHEBI:59789"/>
        <dbReference type="ChEBI" id="CHEBI:65315"/>
        <dbReference type="ChEBI" id="CHEBI:74478"/>
        <dbReference type="EC" id="2.1.1.166"/>
    </reaction>
</comment>
<comment type="subcellular location">
    <subcellularLocation>
        <location evidence="1">Cytoplasm</location>
    </subcellularLocation>
</comment>
<comment type="similarity">
    <text evidence="1">Belongs to the class I-like SAM-binding methyltransferase superfamily. RNA methyltransferase RlmE family.</text>
</comment>
<organism>
    <name type="scientific">Salmonella schwarzengrund (strain CVM19633)</name>
    <dbReference type="NCBI Taxonomy" id="439843"/>
    <lineage>
        <taxon>Bacteria</taxon>
        <taxon>Pseudomonadati</taxon>
        <taxon>Pseudomonadota</taxon>
        <taxon>Gammaproteobacteria</taxon>
        <taxon>Enterobacterales</taxon>
        <taxon>Enterobacteriaceae</taxon>
        <taxon>Salmonella</taxon>
    </lineage>
</organism>
<accession>B4TWE7</accession>
<reference key="1">
    <citation type="journal article" date="2011" name="J. Bacteriol.">
        <title>Comparative genomics of 28 Salmonella enterica isolates: evidence for CRISPR-mediated adaptive sublineage evolution.</title>
        <authorList>
            <person name="Fricke W.F."/>
            <person name="Mammel M.K."/>
            <person name="McDermott P.F."/>
            <person name="Tartera C."/>
            <person name="White D.G."/>
            <person name="Leclerc J.E."/>
            <person name="Ravel J."/>
            <person name="Cebula T.A."/>
        </authorList>
    </citation>
    <scope>NUCLEOTIDE SEQUENCE [LARGE SCALE GENOMIC DNA]</scope>
    <source>
        <strain>CVM19633</strain>
    </source>
</reference>
<dbReference type="EC" id="2.1.1.166" evidence="1"/>
<dbReference type="EMBL" id="CP001127">
    <property type="protein sequence ID" value="ACF90908.1"/>
    <property type="molecule type" value="Genomic_DNA"/>
</dbReference>
<dbReference type="RefSeq" id="WP_000145974.1">
    <property type="nucleotide sequence ID" value="NC_011094.1"/>
</dbReference>
<dbReference type="SMR" id="B4TWE7"/>
<dbReference type="KEGG" id="sew:SeSA_A3487"/>
<dbReference type="HOGENOM" id="CLU_009422_4_0_6"/>
<dbReference type="Proteomes" id="UP000001865">
    <property type="component" value="Chromosome"/>
</dbReference>
<dbReference type="GO" id="GO:0005737">
    <property type="term" value="C:cytoplasm"/>
    <property type="evidence" value="ECO:0007669"/>
    <property type="project" value="UniProtKB-SubCell"/>
</dbReference>
<dbReference type="GO" id="GO:0008650">
    <property type="term" value="F:rRNA (uridine-2'-O-)-methyltransferase activity"/>
    <property type="evidence" value="ECO:0007669"/>
    <property type="project" value="UniProtKB-UniRule"/>
</dbReference>
<dbReference type="CDD" id="cd02440">
    <property type="entry name" value="AdoMet_MTases"/>
    <property type="match status" value="1"/>
</dbReference>
<dbReference type="FunFam" id="3.40.50.150:FF:000005">
    <property type="entry name" value="Ribosomal RNA large subunit methyltransferase E"/>
    <property type="match status" value="1"/>
</dbReference>
<dbReference type="Gene3D" id="3.40.50.150">
    <property type="entry name" value="Vaccinia Virus protein VP39"/>
    <property type="match status" value="1"/>
</dbReference>
<dbReference type="HAMAP" id="MF_01547">
    <property type="entry name" value="RNA_methyltr_E"/>
    <property type="match status" value="1"/>
</dbReference>
<dbReference type="InterPro" id="IPR050082">
    <property type="entry name" value="RNA_methyltr_RlmE"/>
</dbReference>
<dbReference type="InterPro" id="IPR002877">
    <property type="entry name" value="RNA_MeTrfase_FtsJ_dom"/>
</dbReference>
<dbReference type="InterPro" id="IPR015507">
    <property type="entry name" value="rRNA-MeTfrase_E"/>
</dbReference>
<dbReference type="InterPro" id="IPR004512">
    <property type="entry name" value="rRNA_MeTrfase_gammaproteobac"/>
</dbReference>
<dbReference type="InterPro" id="IPR029063">
    <property type="entry name" value="SAM-dependent_MTases_sf"/>
</dbReference>
<dbReference type="NCBIfam" id="NF008390">
    <property type="entry name" value="PRK11188.1"/>
    <property type="match status" value="1"/>
</dbReference>
<dbReference type="NCBIfam" id="TIGR00438">
    <property type="entry name" value="rrmJ"/>
    <property type="match status" value="1"/>
</dbReference>
<dbReference type="PANTHER" id="PTHR10920">
    <property type="entry name" value="RIBOSOMAL RNA METHYLTRANSFERASE"/>
    <property type="match status" value="1"/>
</dbReference>
<dbReference type="PANTHER" id="PTHR10920:SF18">
    <property type="entry name" value="RRNA METHYLTRANSFERASE 2, MITOCHONDRIAL"/>
    <property type="match status" value="1"/>
</dbReference>
<dbReference type="Pfam" id="PF01728">
    <property type="entry name" value="FtsJ"/>
    <property type="match status" value="1"/>
</dbReference>
<dbReference type="PIRSF" id="PIRSF005461">
    <property type="entry name" value="23S_rRNA_mtase"/>
    <property type="match status" value="1"/>
</dbReference>
<dbReference type="SUPFAM" id="SSF53335">
    <property type="entry name" value="S-adenosyl-L-methionine-dependent methyltransferases"/>
    <property type="match status" value="1"/>
</dbReference>
<keyword id="KW-0963">Cytoplasm</keyword>
<keyword id="KW-0489">Methyltransferase</keyword>
<keyword id="KW-0698">rRNA processing</keyword>
<keyword id="KW-0949">S-adenosyl-L-methionine</keyword>
<keyword id="KW-0808">Transferase</keyword>
<feature type="chain" id="PRO_1000195019" description="Ribosomal RNA large subunit methyltransferase E">
    <location>
        <begin position="1"/>
        <end position="208"/>
    </location>
</feature>
<feature type="active site" description="Proton acceptor" evidence="1">
    <location>
        <position position="164"/>
    </location>
</feature>
<feature type="binding site" evidence="1">
    <location>
        <position position="63"/>
    </location>
    <ligand>
        <name>S-adenosyl-L-methionine</name>
        <dbReference type="ChEBI" id="CHEBI:59789"/>
    </ligand>
</feature>
<feature type="binding site" evidence="1">
    <location>
        <position position="65"/>
    </location>
    <ligand>
        <name>S-adenosyl-L-methionine</name>
        <dbReference type="ChEBI" id="CHEBI:59789"/>
    </ligand>
</feature>
<feature type="binding site" evidence="1">
    <location>
        <position position="83"/>
    </location>
    <ligand>
        <name>S-adenosyl-L-methionine</name>
        <dbReference type="ChEBI" id="CHEBI:59789"/>
    </ligand>
</feature>
<feature type="binding site" evidence="1">
    <location>
        <position position="99"/>
    </location>
    <ligand>
        <name>S-adenosyl-L-methionine</name>
        <dbReference type="ChEBI" id="CHEBI:59789"/>
    </ligand>
</feature>
<feature type="binding site" evidence="1">
    <location>
        <position position="124"/>
    </location>
    <ligand>
        <name>S-adenosyl-L-methionine</name>
        <dbReference type="ChEBI" id="CHEBI:59789"/>
    </ligand>
</feature>
<proteinExistence type="inferred from homology"/>